<proteinExistence type="inferred from homology"/>
<reference key="1">
    <citation type="submission" date="2007-08" db="EMBL/GenBank/DDBJ databases">
        <authorList>
            <consortium name="The Vibrio harveyi Genome Sequencing Project"/>
            <person name="Bassler B."/>
            <person name="Clifton S.W."/>
            <person name="Fulton L."/>
            <person name="Delehaunty K."/>
            <person name="Fronick C."/>
            <person name="Harrison M."/>
            <person name="Markivic C."/>
            <person name="Fulton R."/>
            <person name="Tin-Wollam A.-M."/>
            <person name="Shah N."/>
            <person name="Pepin K."/>
            <person name="Nash W."/>
            <person name="Thiruvilangam P."/>
            <person name="Bhonagiri V."/>
            <person name="Waters C."/>
            <person name="Tu K.C."/>
            <person name="Irgon J."/>
            <person name="Wilson R.K."/>
        </authorList>
    </citation>
    <scope>NUCLEOTIDE SEQUENCE [LARGE SCALE GENOMIC DNA]</scope>
    <source>
        <strain>ATCC BAA-1116 / BB120</strain>
    </source>
</reference>
<dbReference type="EC" id="2.3.1.181" evidence="1"/>
<dbReference type="EMBL" id="CP000789">
    <property type="protein sequence ID" value="ABU70201.1"/>
    <property type="molecule type" value="Genomic_DNA"/>
</dbReference>
<dbReference type="RefSeq" id="WP_005438575.1">
    <property type="nucleotide sequence ID" value="NC_009783.1"/>
</dbReference>
<dbReference type="SMR" id="A7MY97"/>
<dbReference type="GeneID" id="67378203"/>
<dbReference type="KEGG" id="vha:VIBHAR_01212"/>
<dbReference type="PATRIC" id="fig|338187.36.peg.1147"/>
<dbReference type="UniPathway" id="UPA00538">
    <property type="reaction ID" value="UER00592"/>
</dbReference>
<dbReference type="Proteomes" id="UP000008152">
    <property type="component" value="Chromosome I"/>
</dbReference>
<dbReference type="GO" id="GO:0005737">
    <property type="term" value="C:cytoplasm"/>
    <property type="evidence" value="ECO:0007669"/>
    <property type="project" value="UniProtKB-SubCell"/>
</dbReference>
<dbReference type="GO" id="GO:0033819">
    <property type="term" value="F:lipoyl(octanoyl) transferase activity"/>
    <property type="evidence" value="ECO:0007669"/>
    <property type="project" value="UniProtKB-EC"/>
</dbReference>
<dbReference type="GO" id="GO:0036211">
    <property type="term" value="P:protein modification process"/>
    <property type="evidence" value="ECO:0007669"/>
    <property type="project" value="InterPro"/>
</dbReference>
<dbReference type="CDD" id="cd16444">
    <property type="entry name" value="LipB"/>
    <property type="match status" value="1"/>
</dbReference>
<dbReference type="FunFam" id="3.30.930.10:FF:000020">
    <property type="entry name" value="Octanoyltransferase"/>
    <property type="match status" value="1"/>
</dbReference>
<dbReference type="Gene3D" id="3.30.930.10">
    <property type="entry name" value="Bira Bifunctional Protein, Domain 2"/>
    <property type="match status" value="1"/>
</dbReference>
<dbReference type="HAMAP" id="MF_00013">
    <property type="entry name" value="LipB"/>
    <property type="match status" value="1"/>
</dbReference>
<dbReference type="InterPro" id="IPR045864">
    <property type="entry name" value="aa-tRNA-synth_II/BPL/LPL"/>
</dbReference>
<dbReference type="InterPro" id="IPR004143">
    <property type="entry name" value="BPL_LPL_catalytic"/>
</dbReference>
<dbReference type="InterPro" id="IPR000544">
    <property type="entry name" value="Octanoyltransferase"/>
</dbReference>
<dbReference type="InterPro" id="IPR020605">
    <property type="entry name" value="Octanoyltransferase_CS"/>
</dbReference>
<dbReference type="NCBIfam" id="TIGR00214">
    <property type="entry name" value="lipB"/>
    <property type="match status" value="1"/>
</dbReference>
<dbReference type="NCBIfam" id="NF010922">
    <property type="entry name" value="PRK14342.1"/>
    <property type="match status" value="1"/>
</dbReference>
<dbReference type="PANTHER" id="PTHR10993:SF7">
    <property type="entry name" value="LIPOYLTRANSFERASE 2, MITOCHONDRIAL-RELATED"/>
    <property type="match status" value="1"/>
</dbReference>
<dbReference type="PANTHER" id="PTHR10993">
    <property type="entry name" value="OCTANOYLTRANSFERASE"/>
    <property type="match status" value="1"/>
</dbReference>
<dbReference type="Pfam" id="PF21948">
    <property type="entry name" value="LplA-B_cat"/>
    <property type="match status" value="1"/>
</dbReference>
<dbReference type="PIRSF" id="PIRSF016262">
    <property type="entry name" value="LPLase"/>
    <property type="match status" value="1"/>
</dbReference>
<dbReference type="SUPFAM" id="SSF55681">
    <property type="entry name" value="Class II aaRS and biotin synthetases"/>
    <property type="match status" value="1"/>
</dbReference>
<dbReference type="PROSITE" id="PS51733">
    <property type="entry name" value="BPL_LPL_CATALYTIC"/>
    <property type="match status" value="1"/>
</dbReference>
<dbReference type="PROSITE" id="PS01313">
    <property type="entry name" value="LIPB"/>
    <property type="match status" value="1"/>
</dbReference>
<evidence type="ECO:0000255" key="1">
    <source>
        <dbReference type="HAMAP-Rule" id="MF_00013"/>
    </source>
</evidence>
<evidence type="ECO:0000255" key="2">
    <source>
        <dbReference type="PROSITE-ProRule" id="PRU01067"/>
    </source>
</evidence>
<name>LIPB_VIBC1</name>
<comment type="function">
    <text evidence="1">Catalyzes the transfer of endogenously produced octanoic acid from octanoyl-acyl-carrier-protein onto the lipoyl domains of lipoate-dependent enzymes. Lipoyl-ACP can also act as a substrate although octanoyl-ACP is likely to be the physiological substrate.</text>
</comment>
<comment type="catalytic activity">
    <reaction evidence="1">
        <text>octanoyl-[ACP] + L-lysyl-[protein] = N(6)-octanoyl-L-lysyl-[protein] + holo-[ACP] + H(+)</text>
        <dbReference type="Rhea" id="RHEA:17665"/>
        <dbReference type="Rhea" id="RHEA-COMP:9636"/>
        <dbReference type="Rhea" id="RHEA-COMP:9685"/>
        <dbReference type="Rhea" id="RHEA-COMP:9752"/>
        <dbReference type="Rhea" id="RHEA-COMP:9928"/>
        <dbReference type="ChEBI" id="CHEBI:15378"/>
        <dbReference type="ChEBI" id="CHEBI:29969"/>
        <dbReference type="ChEBI" id="CHEBI:64479"/>
        <dbReference type="ChEBI" id="CHEBI:78463"/>
        <dbReference type="ChEBI" id="CHEBI:78809"/>
        <dbReference type="EC" id="2.3.1.181"/>
    </reaction>
</comment>
<comment type="pathway">
    <text evidence="1">Protein modification; protein lipoylation via endogenous pathway; protein N(6)-(lipoyl)lysine from octanoyl-[acyl-carrier-protein]: step 1/2.</text>
</comment>
<comment type="subcellular location">
    <subcellularLocation>
        <location evidence="1">Cytoplasm</location>
    </subcellularLocation>
</comment>
<comment type="miscellaneous">
    <text evidence="1">In the reaction, the free carboxyl group of octanoic acid is attached via an amide linkage to the epsilon-amino group of a specific lysine residue of lipoyl domains of lipoate-dependent enzymes.</text>
</comment>
<comment type="similarity">
    <text evidence="1">Belongs to the LipB family.</text>
</comment>
<accession>A7MY97</accession>
<sequence length="220" mass="24565">MQHQLVVKRLGRQDYEPVWKAMHEFTDQRTDDTPDEVWLVEHNPVFTQGQAGKAEHLINTGDIPVVQSDRGGQVTYHGPGQLVAYFLINLRRKKLGVRDLVTHIENLVINTLKAYNIDSAARPDAPGVYVDGKKICSLGLRIRKGCSFHGLALNVNMDLGPFLRINPCGYEGMEMVQVSQVGGPEDIEAVEKQLIQELVTLLDYEQVEFSTEAPSQGNKA</sequence>
<protein>
    <recommendedName>
        <fullName evidence="1">Octanoyltransferase</fullName>
        <ecNumber evidence="1">2.3.1.181</ecNumber>
    </recommendedName>
    <alternativeName>
        <fullName evidence="1">Lipoate-protein ligase B</fullName>
    </alternativeName>
    <alternativeName>
        <fullName evidence="1">Lipoyl/octanoyl transferase</fullName>
    </alternativeName>
    <alternativeName>
        <fullName evidence="1">Octanoyl-[acyl-carrier-protein]-protein N-octanoyltransferase</fullName>
    </alternativeName>
</protein>
<gene>
    <name evidence="1" type="primary">lipB</name>
    <name type="ordered locus">VIBHAR_01212</name>
</gene>
<feature type="chain" id="PRO_1000001143" description="Octanoyltransferase">
    <location>
        <begin position="1"/>
        <end position="220"/>
    </location>
</feature>
<feature type="domain" description="BPL/LPL catalytic" evidence="2">
    <location>
        <begin position="31"/>
        <end position="206"/>
    </location>
</feature>
<feature type="active site" description="Acyl-thioester intermediate" evidence="1">
    <location>
        <position position="168"/>
    </location>
</feature>
<feature type="binding site" evidence="1">
    <location>
        <begin position="70"/>
        <end position="77"/>
    </location>
    <ligand>
        <name>substrate</name>
    </ligand>
</feature>
<feature type="binding site" evidence="1">
    <location>
        <begin position="137"/>
        <end position="139"/>
    </location>
    <ligand>
        <name>substrate</name>
    </ligand>
</feature>
<feature type="binding site" evidence="1">
    <location>
        <begin position="150"/>
        <end position="152"/>
    </location>
    <ligand>
        <name>substrate</name>
    </ligand>
</feature>
<feature type="site" description="Lowers pKa of active site Cys" evidence="1">
    <location>
        <position position="134"/>
    </location>
</feature>
<organism>
    <name type="scientific">Vibrio campbellii (strain ATCC BAA-1116)</name>
    <dbReference type="NCBI Taxonomy" id="2902295"/>
    <lineage>
        <taxon>Bacteria</taxon>
        <taxon>Pseudomonadati</taxon>
        <taxon>Pseudomonadota</taxon>
        <taxon>Gammaproteobacteria</taxon>
        <taxon>Vibrionales</taxon>
        <taxon>Vibrionaceae</taxon>
        <taxon>Vibrio</taxon>
    </lineage>
</organism>
<keyword id="KW-0012">Acyltransferase</keyword>
<keyword id="KW-0963">Cytoplasm</keyword>
<keyword id="KW-0808">Transferase</keyword>